<proteinExistence type="evidence at protein level"/>
<evidence type="ECO:0000250" key="1"/>
<evidence type="ECO:0000255" key="2">
    <source>
        <dbReference type="PROSITE-ProRule" id="PRU00088"/>
    </source>
</evidence>
<evidence type="ECO:0000269" key="3">
    <source>
    </source>
</evidence>
<evidence type="ECO:0000305" key="4"/>
<evidence type="ECO:0007829" key="5">
    <source>
        <dbReference type="PDB" id="1YCG"/>
    </source>
</evidence>
<organism>
    <name type="scientific">Moorella thermoacetica (strain ATCC 39073 / JCM 9320)</name>
    <dbReference type="NCBI Taxonomy" id="264732"/>
    <lineage>
        <taxon>Bacteria</taxon>
        <taxon>Bacillati</taxon>
        <taxon>Bacillota</taxon>
        <taxon>Clostridia</taxon>
        <taxon>Moorellales</taxon>
        <taxon>Moorellaceae</taxon>
        <taxon>Moorella</taxon>
    </lineage>
</organism>
<name>FPRA_MOOTA</name>
<sequence length="399" mass="44297">MSQPVAITDGIYWVGAVDWNIRYFHGPAFSTHRGTTYNAYLIVDDKTALVDTVYEPFKEELIAKLKQIKDPVKLDYLVVNHTESDHAGAFPAIMELCPDAHVLCTQRAFDSLKAHYSHIDFNYTIVKTGTSVSLGKRSLTFIEAPMLHWPDSMFTYVPEEALLLPNDAFGQHIATSVRFDDQVDAGLIMDEAAKYYANILMPFSNLITKKLDEIQKINLAIKTIAPSHGIIWRKDPGRIIEAYARWAEGQGKAKAVIAYDTMWLSTEKMAHALMDGLVAGGCEVKLFKLSVSDRNDVIKEILDARAVLVGSPTINNDILPVVSPLLDDLVGLRPKNKVGLAFGAYGWGGGAQKILEERLKAAKIELIAEPGPTVQWVPRGEDLQRCYELGRKIAARIAD</sequence>
<dbReference type="EC" id="1.-.-.-"/>
<dbReference type="EMBL" id="AF202316">
    <property type="protein sequence ID" value="AAG00802.1"/>
    <property type="molecule type" value="Genomic_DNA"/>
</dbReference>
<dbReference type="EMBL" id="CP000232">
    <property type="protein sequence ID" value="ABC19601.1"/>
    <property type="molecule type" value="Genomic_DNA"/>
</dbReference>
<dbReference type="RefSeq" id="YP_430144.1">
    <property type="nucleotide sequence ID" value="NC_007644.1"/>
</dbReference>
<dbReference type="PDB" id="1YCF">
    <property type="method" value="X-ray"/>
    <property type="resolution" value="3.00 A"/>
    <property type="chains" value="A/B/C/D=2-399"/>
</dbReference>
<dbReference type="PDB" id="1YCG">
    <property type="method" value="X-ray"/>
    <property type="resolution" value="2.80 A"/>
    <property type="chains" value="A/B/C/D=2-399"/>
</dbReference>
<dbReference type="PDB" id="1YCH">
    <property type="method" value="X-ray"/>
    <property type="resolution" value="2.80 A"/>
    <property type="chains" value="A/B/C/D=2-399"/>
</dbReference>
<dbReference type="PDBsum" id="1YCF"/>
<dbReference type="PDBsum" id="1YCG"/>
<dbReference type="PDBsum" id="1YCH"/>
<dbReference type="SMR" id="Q9FDN7"/>
<dbReference type="STRING" id="264732.Moth_1287"/>
<dbReference type="DrugBank" id="DB03247">
    <property type="generic name" value="Flavin mononucleotide"/>
</dbReference>
<dbReference type="EnsemblBacteria" id="ABC19601">
    <property type="protein sequence ID" value="ABC19601"/>
    <property type="gene ID" value="Moth_1287"/>
</dbReference>
<dbReference type="GeneID" id="45617328"/>
<dbReference type="KEGG" id="mta:Moth_1287"/>
<dbReference type="PATRIC" id="fig|264732.11.peg.1381"/>
<dbReference type="eggNOG" id="COG0426">
    <property type="taxonomic scope" value="Bacteria"/>
</dbReference>
<dbReference type="HOGENOM" id="CLU_017490_0_0_9"/>
<dbReference type="OrthoDB" id="9807946at2"/>
<dbReference type="EvolutionaryTrace" id="Q9FDN7"/>
<dbReference type="GO" id="GO:0009055">
    <property type="term" value="F:electron transfer activity"/>
    <property type="evidence" value="ECO:0007669"/>
    <property type="project" value="InterPro"/>
</dbReference>
<dbReference type="GO" id="GO:0010181">
    <property type="term" value="F:FMN binding"/>
    <property type="evidence" value="ECO:0007669"/>
    <property type="project" value="InterPro"/>
</dbReference>
<dbReference type="GO" id="GO:0046872">
    <property type="term" value="F:metal ion binding"/>
    <property type="evidence" value="ECO:0007669"/>
    <property type="project" value="UniProtKB-KW"/>
</dbReference>
<dbReference type="GO" id="GO:0016651">
    <property type="term" value="F:oxidoreductase activity, acting on NAD(P)H"/>
    <property type="evidence" value="ECO:0007669"/>
    <property type="project" value="UniProtKB-ARBA"/>
</dbReference>
<dbReference type="CDD" id="cd07709">
    <property type="entry name" value="flavodiiron_proteins_MBL-fold"/>
    <property type="match status" value="1"/>
</dbReference>
<dbReference type="Gene3D" id="3.40.50.360">
    <property type="match status" value="1"/>
</dbReference>
<dbReference type="Gene3D" id="3.60.15.10">
    <property type="entry name" value="Ribonuclease Z/Hydroxyacylglutathione hydrolase-like"/>
    <property type="match status" value="1"/>
</dbReference>
<dbReference type="InterPro" id="IPR008254">
    <property type="entry name" value="Flavodoxin/NO_synth"/>
</dbReference>
<dbReference type="InterPro" id="IPR029039">
    <property type="entry name" value="Flavoprotein-like_sf"/>
</dbReference>
<dbReference type="InterPro" id="IPR001279">
    <property type="entry name" value="Metallo-B-lactamas"/>
</dbReference>
<dbReference type="InterPro" id="IPR045761">
    <property type="entry name" value="ODP_dom"/>
</dbReference>
<dbReference type="InterPro" id="IPR036866">
    <property type="entry name" value="RibonucZ/Hydroxyglut_hydro"/>
</dbReference>
<dbReference type="InterPro" id="IPR016440">
    <property type="entry name" value="Rubredoxin-O_OxRdtase"/>
</dbReference>
<dbReference type="PANTHER" id="PTHR43717">
    <property type="entry name" value="ANAEROBIC NITRIC OXIDE REDUCTASE FLAVORUBREDOXIN"/>
    <property type="match status" value="1"/>
</dbReference>
<dbReference type="PANTHER" id="PTHR43717:SF1">
    <property type="entry name" value="ANAEROBIC NITRIC OXIDE REDUCTASE FLAVORUBREDOXIN"/>
    <property type="match status" value="1"/>
</dbReference>
<dbReference type="Pfam" id="PF00258">
    <property type="entry name" value="Flavodoxin_1"/>
    <property type="match status" value="1"/>
</dbReference>
<dbReference type="Pfam" id="PF19583">
    <property type="entry name" value="ODP"/>
    <property type="match status" value="1"/>
</dbReference>
<dbReference type="PIRSF" id="PIRSF005243">
    <property type="entry name" value="ROO"/>
    <property type="match status" value="1"/>
</dbReference>
<dbReference type="SMART" id="SM00849">
    <property type="entry name" value="Lactamase_B"/>
    <property type="match status" value="1"/>
</dbReference>
<dbReference type="SUPFAM" id="SSF52218">
    <property type="entry name" value="Flavoproteins"/>
    <property type="match status" value="1"/>
</dbReference>
<dbReference type="SUPFAM" id="SSF56281">
    <property type="entry name" value="Metallo-hydrolase/oxidoreductase"/>
    <property type="match status" value="1"/>
</dbReference>
<dbReference type="PROSITE" id="PS50902">
    <property type="entry name" value="FLAVODOXIN_LIKE"/>
    <property type="match status" value="1"/>
</dbReference>
<comment type="function">
    <text>Has nitric oxide reductase activity in combination with Hrb; probably involved in nitrosative stress protection.</text>
</comment>
<comment type="cofactor">
    <cofactor evidence="3">
        <name>FMN</name>
        <dbReference type="ChEBI" id="CHEBI:58210"/>
    </cofactor>
    <text evidence="3">Binds 1 FMN per subunit.</text>
</comment>
<comment type="cofactor">
    <cofactor evidence="3">
        <name>Fe cation</name>
        <dbReference type="ChEBI" id="CHEBI:24875"/>
    </cofactor>
    <text evidence="3">Binds 2 iron ions per subunit.</text>
</comment>
<comment type="subunit">
    <text>Homodimer.</text>
</comment>
<comment type="induction">
    <text>Constitutively expressed.</text>
</comment>
<comment type="similarity">
    <text evidence="4">In the N-terminal section; belongs to the zinc metallo-hydrolase group 3 family.</text>
</comment>
<reference key="1">
    <citation type="journal article" date="2001" name="J. Bacteriol.">
        <title>Five-gene cluster in Clostridium thermoaceticum consisting of two divergent operons encoding rubredoxin oxidoreductase-rubredoxin and rubrerythrin-type A flavoprotein- high-molecular-weight rubredoxin.</title>
        <authorList>
            <person name="Das A."/>
            <person name="Coulter E.D."/>
            <person name="Kurtz D.M. Jr."/>
            <person name="Ljungdahl L.G."/>
        </authorList>
    </citation>
    <scope>NUCLEOTIDE SEQUENCE [GENOMIC DNA]</scope>
</reference>
<reference key="2">
    <citation type="journal article" date="2008" name="Environ. Microbiol.">
        <title>The complete genome sequence of Moorella thermoacetica (f. Clostridium thermoaceticum).</title>
        <authorList>
            <person name="Pierce E."/>
            <person name="Xie G."/>
            <person name="Barabote R.D."/>
            <person name="Saunders E."/>
            <person name="Han C.S."/>
            <person name="Detter J.C."/>
            <person name="Richardson P."/>
            <person name="Brettin T.S."/>
            <person name="Das A."/>
            <person name="Ljungdahl L.G."/>
            <person name="Ragsdale S.W."/>
        </authorList>
    </citation>
    <scope>NUCLEOTIDE SEQUENCE [LARGE SCALE GENOMIC DNA]</scope>
    <source>
        <strain>ATCC 39073 / JCM 9320</strain>
    </source>
</reference>
<reference key="3">
    <citation type="journal article" date="2003" name="Biochemistry">
        <title>A flavodiiron protein and high molecular weight rubredoxin from Moorella thermoacetica with nitric oxide reductase activity.</title>
        <authorList>
            <person name="Silaghi-Dumitrescu R."/>
            <person name="Coulter E.D."/>
            <person name="Das A."/>
            <person name="Ljungdahl L.G."/>
            <person name="Jameson G.N.L."/>
            <person name="Huynh B.H."/>
            <person name="Kurtz D.M. Jr."/>
        </authorList>
    </citation>
    <scope>IDENTIFICATION OF FUNCTION</scope>
    <scope>CHARACTERIZATION</scope>
    <scope>COFACTOR</scope>
</reference>
<accession>Q9FDN7</accession>
<accession>Q2RIY8</accession>
<protein>
    <recommendedName>
        <fullName>Nitric oxide reductase</fullName>
        <ecNumber>1.-.-.-</ecNumber>
    </recommendedName>
    <alternativeName>
        <fullName>FMN protein FprA</fullName>
    </alternativeName>
    <alternativeName>
        <fullName>Flavoprotein A</fullName>
    </alternativeName>
    <alternativeName>
        <fullName>Type A flavoprotein FprA</fullName>
    </alternativeName>
</protein>
<keyword id="KW-0002">3D-structure</keyword>
<keyword id="KW-0249">Electron transport</keyword>
<keyword id="KW-0285">Flavoprotein</keyword>
<keyword id="KW-0288">FMN</keyword>
<keyword id="KW-0408">Iron</keyword>
<keyword id="KW-0479">Metal-binding</keyword>
<keyword id="KW-0560">Oxidoreductase</keyword>
<keyword id="KW-0813">Transport</keyword>
<gene>
    <name type="primary">fprA</name>
    <name type="ordered locus">Moth_1287</name>
</gene>
<feature type="chain" id="PRO_0000216805" description="Nitric oxide reductase">
    <location>
        <begin position="1"/>
        <end position="399"/>
    </location>
</feature>
<feature type="domain" description="Flavodoxin-like" evidence="2">
    <location>
        <begin position="255"/>
        <end position="394"/>
    </location>
</feature>
<feature type="region of interest" description="Zinc metallo-hydrolase">
    <location>
        <begin position="32"/>
        <end position="221"/>
    </location>
</feature>
<feature type="binding site" evidence="1">
    <location>
        <position position="81"/>
    </location>
    <ligand>
        <name>Fe cation</name>
        <dbReference type="ChEBI" id="CHEBI:24875"/>
        <label>1</label>
    </ligand>
</feature>
<feature type="binding site" evidence="1">
    <location>
        <position position="83"/>
    </location>
    <ligand>
        <name>Fe cation</name>
        <dbReference type="ChEBI" id="CHEBI:24875"/>
        <label>1</label>
    </ligand>
</feature>
<feature type="binding site" evidence="1">
    <location>
        <position position="85"/>
    </location>
    <ligand>
        <name>Fe cation</name>
        <dbReference type="ChEBI" id="CHEBI:24875"/>
        <label>2</label>
    </ligand>
</feature>
<feature type="binding site" evidence="1">
    <location>
        <position position="148"/>
    </location>
    <ligand>
        <name>Fe cation</name>
        <dbReference type="ChEBI" id="CHEBI:24875"/>
        <label>1</label>
    </ligand>
</feature>
<feature type="binding site" evidence="1">
    <location>
        <position position="167"/>
    </location>
    <ligand>
        <name>Fe cation</name>
        <dbReference type="ChEBI" id="CHEBI:24875"/>
        <label>1</label>
    </ligand>
</feature>
<feature type="binding site" evidence="1">
    <location>
        <position position="167"/>
    </location>
    <ligand>
        <name>Fe cation</name>
        <dbReference type="ChEBI" id="CHEBI:24875"/>
        <label>2</label>
    </ligand>
</feature>
<feature type="binding site" evidence="1">
    <location>
        <position position="228"/>
    </location>
    <ligand>
        <name>Fe cation</name>
        <dbReference type="ChEBI" id="CHEBI:24875"/>
        <label>2</label>
    </ligand>
</feature>
<feature type="strand" evidence="5">
    <location>
        <begin position="5"/>
        <end position="8"/>
    </location>
</feature>
<feature type="strand" evidence="5">
    <location>
        <begin position="11"/>
        <end position="13"/>
    </location>
</feature>
<feature type="strand" evidence="5">
    <location>
        <begin position="16"/>
        <end position="20"/>
    </location>
</feature>
<feature type="turn" evidence="5">
    <location>
        <begin position="25"/>
        <end position="28"/>
    </location>
</feature>
<feature type="strand" evidence="5">
    <location>
        <begin position="35"/>
        <end position="37"/>
    </location>
</feature>
<feature type="strand" evidence="5">
    <location>
        <begin position="40"/>
        <end position="42"/>
    </location>
</feature>
<feature type="strand" evidence="5">
    <location>
        <begin position="44"/>
        <end position="46"/>
    </location>
</feature>
<feature type="strand" evidence="5">
    <location>
        <begin position="48"/>
        <end position="50"/>
    </location>
</feature>
<feature type="helix" evidence="5">
    <location>
        <begin position="55"/>
        <end position="57"/>
    </location>
</feature>
<feature type="helix" evidence="5">
    <location>
        <begin position="58"/>
        <end position="68"/>
    </location>
</feature>
<feature type="strand" evidence="5">
    <location>
        <begin position="75"/>
        <end position="78"/>
    </location>
</feature>
<feature type="helix" evidence="5">
    <location>
        <begin position="84"/>
        <end position="87"/>
    </location>
</feature>
<feature type="helix" evidence="5">
    <location>
        <begin position="90"/>
        <end position="96"/>
    </location>
</feature>
<feature type="strand" evidence="5">
    <location>
        <begin position="101"/>
        <end position="104"/>
    </location>
</feature>
<feature type="helix" evidence="5">
    <location>
        <begin position="106"/>
        <end position="115"/>
    </location>
</feature>
<feature type="strand" evidence="5">
    <location>
        <begin position="122"/>
        <end position="125"/>
    </location>
</feature>
<feature type="strand" evidence="5">
    <location>
        <begin position="131"/>
        <end position="133"/>
    </location>
</feature>
<feature type="strand" evidence="5">
    <location>
        <begin position="138"/>
        <end position="143"/>
    </location>
</feature>
<feature type="strand" evidence="5">
    <location>
        <begin position="147"/>
        <end position="149"/>
    </location>
</feature>
<feature type="strand" evidence="5">
    <location>
        <begin position="153"/>
        <end position="157"/>
    </location>
</feature>
<feature type="turn" evidence="5">
    <location>
        <begin position="158"/>
        <end position="161"/>
    </location>
</feature>
<feature type="strand" evidence="5">
    <location>
        <begin position="162"/>
        <end position="166"/>
    </location>
</feature>
<feature type="turn" evidence="5">
    <location>
        <begin position="167"/>
        <end position="169"/>
    </location>
</feature>
<feature type="helix" evidence="5">
    <location>
        <begin position="180"/>
        <end position="182"/>
    </location>
</feature>
<feature type="helix" evidence="5">
    <location>
        <begin position="185"/>
        <end position="199"/>
    </location>
</feature>
<feature type="helix" evidence="5">
    <location>
        <begin position="201"/>
        <end position="203"/>
    </location>
</feature>
<feature type="helix" evidence="5">
    <location>
        <begin position="204"/>
        <end position="216"/>
    </location>
</feature>
<feature type="strand" evidence="5">
    <location>
        <begin position="222"/>
        <end position="229"/>
    </location>
</feature>
<feature type="helix" evidence="5">
    <location>
        <begin position="236"/>
        <end position="248"/>
    </location>
</feature>
<feature type="strand" evidence="5">
    <location>
        <begin position="253"/>
        <end position="259"/>
    </location>
</feature>
<feature type="strand" evidence="5">
    <location>
        <begin position="262"/>
        <end position="264"/>
    </location>
</feature>
<feature type="helix" evidence="5">
    <location>
        <begin position="265"/>
        <end position="279"/>
    </location>
</feature>
<feature type="strand" evidence="5">
    <location>
        <begin position="283"/>
        <end position="288"/>
    </location>
</feature>
<feature type="helix" evidence="5">
    <location>
        <begin position="289"/>
        <end position="291"/>
    </location>
</feature>
<feature type="helix" evidence="5">
    <location>
        <begin position="294"/>
        <end position="303"/>
    </location>
</feature>
<feature type="strand" evidence="5">
    <location>
        <begin position="305"/>
        <end position="310"/>
    </location>
</feature>
<feature type="helix" evidence="5">
    <location>
        <begin position="320"/>
        <end position="322"/>
    </location>
</feature>
<feature type="helix" evidence="5">
    <location>
        <begin position="323"/>
        <end position="332"/>
    </location>
</feature>
<feature type="strand" evidence="5">
    <location>
        <begin position="338"/>
        <end position="348"/>
    </location>
</feature>
<feature type="helix" evidence="5">
    <location>
        <begin position="351"/>
        <end position="361"/>
    </location>
</feature>
<feature type="strand" evidence="5">
    <location>
        <begin position="365"/>
        <end position="367"/>
    </location>
</feature>
<feature type="strand" evidence="5">
    <location>
        <begin position="373"/>
        <end position="377"/>
    </location>
</feature>
<feature type="helix" evidence="5">
    <location>
        <begin position="380"/>
        <end position="397"/>
    </location>
</feature>